<sequence>FLPIIASVAAKVFPKIFCAISKKC</sequence>
<protein>
    <recommendedName>
        <fullName>Brevinin-1Pe</fullName>
    </recommendedName>
</protein>
<keyword id="KW-0878">Amphibian defense peptide</keyword>
<keyword id="KW-0044">Antibiotic</keyword>
<keyword id="KW-0929">Antimicrobial</keyword>
<keyword id="KW-0903">Direct protein sequencing</keyword>
<keyword id="KW-1015">Disulfide bond</keyword>
<keyword id="KW-0295">Fungicide</keyword>
<keyword id="KW-0964">Secreted</keyword>
<feature type="peptide" id="PRO_0000043545" description="Brevinin-1Pe">
    <location>
        <begin position="1"/>
        <end position="24"/>
    </location>
</feature>
<feature type="disulfide bond" evidence="1">
    <location>
        <begin position="18"/>
        <end position="24"/>
    </location>
</feature>
<name>BR1E_LITPI</name>
<proteinExistence type="evidence at protein level"/>
<reference key="1">
    <citation type="journal article" date="2000" name="Eur. J. Biochem.">
        <title>Peptides with antimicrobial activity from four different families isolated from the skins of the North American frogs Rana luteiventris, Rana berlandieri and Rana pipiens.</title>
        <authorList>
            <person name="Goraya J."/>
            <person name="Wang Y."/>
            <person name="Li Z."/>
            <person name="O'Flaherty M."/>
            <person name="Knoop F.C."/>
            <person name="Platz J.E."/>
            <person name="Conlon J.M."/>
        </authorList>
    </citation>
    <scope>PROTEIN SEQUENCE</scope>
    <scope>FUNCTION</scope>
    <scope>MASS SPECTROMETRY</scope>
    <source>
        <tissue>Skin secretion</tissue>
    </source>
</reference>
<comment type="function">
    <text evidence="2">Antibacterial activity against Gram-positive bacterium S.aureus and Gram-negative bacterium E.coli. Has activity against C.albicans.</text>
</comment>
<comment type="subcellular location">
    <subcellularLocation>
        <location>Secreted</location>
    </subcellularLocation>
</comment>
<comment type="tissue specificity">
    <text>Expressed by the skin glands.</text>
</comment>
<comment type="mass spectrometry"/>
<comment type="similarity">
    <text evidence="3">Belongs to the frog skin active peptide (FSAP) family. Brevinin subfamily.</text>
</comment>
<accession>P82845</accession>
<dbReference type="GO" id="GO:0005576">
    <property type="term" value="C:extracellular region"/>
    <property type="evidence" value="ECO:0007669"/>
    <property type="project" value="UniProtKB-SubCell"/>
</dbReference>
<dbReference type="GO" id="GO:0042742">
    <property type="term" value="P:defense response to bacterium"/>
    <property type="evidence" value="ECO:0007669"/>
    <property type="project" value="UniProtKB-KW"/>
</dbReference>
<dbReference type="GO" id="GO:0050832">
    <property type="term" value="P:defense response to fungus"/>
    <property type="evidence" value="ECO:0007669"/>
    <property type="project" value="UniProtKB-KW"/>
</dbReference>
<dbReference type="GO" id="GO:0031640">
    <property type="term" value="P:killing of cells of another organism"/>
    <property type="evidence" value="ECO:0007669"/>
    <property type="project" value="UniProtKB-KW"/>
</dbReference>
<dbReference type="InterPro" id="IPR012520">
    <property type="entry name" value="Antimicrobial_frog_1"/>
</dbReference>
<dbReference type="Pfam" id="PF08018">
    <property type="entry name" value="Antimicrobial_1"/>
    <property type="match status" value="1"/>
</dbReference>
<evidence type="ECO:0000250" key="1"/>
<evidence type="ECO:0000269" key="2">
    <source>
    </source>
</evidence>
<evidence type="ECO:0000305" key="3"/>
<organism>
    <name type="scientific">Lithobates pipiens</name>
    <name type="common">Northern leopard frog</name>
    <name type="synonym">Rana pipiens</name>
    <dbReference type="NCBI Taxonomy" id="8404"/>
    <lineage>
        <taxon>Eukaryota</taxon>
        <taxon>Metazoa</taxon>
        <taxon>Chordata</taxon>
        <taxon>Craniata</taxon>
        <taxon>Vertebrata</taxon>
        <taxon>Euteleostomi</taxon>
        <taxon>Amphibia</taxon>
        <taxon>Batrachia</taxon>
        <taxon>Anura</taxon>
        <taxon>Neobatrachia</taxon>
        <taxon>Ranoidea</taxon>
        <taxon>Ranidae</taxon>
        <taxon>Lithobates</taxon>
    </lineage>
</organism>